<reference key="1">
    <citation type="submission" date="2009-05" db="EMBL/GenBank/DDBJ databases">
        <title>Complete sequence of Tolumonas auensis DSM 9187.</title>
        <authorList>
            <consortium name="US DOE Joint Genome Institute"/>
            <person name="Lucas S."/>
            <person name="Copeland A."/>
            <person name="Lapidus A."/>
            <person name="Glavina del Rio T."/>
            <person name="Tice H."/>
            <person name="Bruce D."/>
            <person name="Goodwin L."/>
            <person name="Pitluck S."/>
            <person name="Chertkov O."/>
            <person name="Brettin T."/>
            <person name="Detter J.C."/>
            <person name="Han C."/>
            <person name="Larimer F."/>
            <person name="Land M."/>
            <person name="Hauser L."/>
            <person name="Kyrpides N."/>
            <person name="Mikhailova N."/>
            <person name="Spring S."/>
            <person name="Beller H."/>
        </authorList>
    </citation>
    <scope>NUCLEOTIDE SEQUENCE [LARGE SCALE GENOMIC DNA]</scope>
    <source>
        <strain>DSM 9187 / NBRC 110442 / TA 4</strain>
    </source>
</reference>
<organism>
    <name type="scientific">Tolumonas auensis (strain DSM 9187 / NBRC 110442 / TA 4)</name>
    <dbReference type="NCBI Taxonomy" id="595494"/>
    <lineage>
        <taxon>Bacteria</taxon>
        <taxon>Pseudomonadati</taxon>
        <taxon>Pseudomonadota</taxon>
        <taxon>Gammaproteobacteria</taxon>
        <taxon>Aeromonadales</taxon>
        <taxon>Aeromonadaceae</taxon>
        <taxon>Tolumonas</taxon>
    </lineage>
</organism>
<name>CMOB_TOLAT</name>
<proteinExistence type="inferred from homology"/>
<gene>
    <name evidence="1" type="primary">cmoB</name>
    <name type="ordered locus">Tola_0786</name>
</gene>
<feature type="chain" id="PRO_1000215647" description="tRNA U34 carboxymethyltransferase">
    <location>
        <begin position="1"/>
        <end position="326"/>
    </location>
</feature>
<feature type="binding site" evidence="1">
    <location>
        <position position="91"/>
    </location>
    <ligand>
        <name>carboxy-S-adenosyl-L-methionine</name>
        <dbReference type="ChEBI" id="CHEBI:134278"/>
    </ligand>
</feature>
<feature type="binding site" evidence="1">
    <location>
        <position position="105"/>
    </location>
    <ligand>
        <name>carboxy-S-adenosyl-L-methionine</name>
        <dbReference type="ChEBI" id="CHEBI:134278"/>
    </ligand>
</feature>
<feature type="binding site" evidence="1">
    <location>
        <position position="110"/>
    </location>
    <ligand>
        <name>carboxy-S-adenosyl-L-methionine</name>
        <dbReference type="ChEBI" id="CHEBI:134278"/>
    </ligand>
</feature>
<feature type="binding site" evidence="1">
    <location>
        <position position="130"/>
    </location>
    <ligand>
        <name>carboxy-S-adenosyl-L-methionine</name>
        <dbReference type="ChEBI" id="CHEBI:134278"/>
    </ligand>
</feature>
<feature type="binding site" evidence="1">
    <location>
        <position position="196"/>
    </location>
    <ligand>
        <name>carboxy-S-adenosyl-L-methionine</name>
        <dbReference type="ChEBI" id="CHEBI:134278"/>
    </ligand>
</feature>
<feature type="binding site" evidence="1">
    <location>
        <position position="200"/>
    </location>
    <ligand>
        <name>carboxy-S-adenosyl-L-methionine</name>
        <dbReference type="ChEBI" id="CHEBI:134278"/>
    </ligand>
</feature>
<feature type="binding site" evidence="1">
    <location>
        <position position="315"/>
    </location>
    <ligand>
        <name>carboxy-S-adenosyl-L-methionine</name>
        <dbReference type="ChEBI" id="CHEBI:134278"/>
    </ligand>
</feature>
<comment type="function">
    <text evidence="1">Catalyzes carboxymethyl transfer from carboxy-S-adenosyl-L-methionine (Cx-SAM) to 5-hydroxyuridine (ho5U) to form 5-carboxymethoxyuridine (cmo5U) at position 34 in tRNAs.</text>
</comment>
<comment type="catalytic activity">
    <reaction evidence="1">
        <text>carboxy-S-adenosyl-L-methionine + 5-hydroxyuridine(34) in tRNA = 5-carboxymethoxyuridine(34) in tRNA + S-adenosyl-L-homocysteine + H(+)</text>
        <dbReference type="Rhea" id="RHEA:52848"/>
        <dbReference type="Rhea" id="RHEA-COMP:13381"/>
        <dbReference type="Rhea" id="RHEA-COMP:13383"/>
        <dbReference type="ChEBI" id="CHEBI:15378"/>
        <dbReference type="ChEBI" id="CHEBI:57856"/>
        <dbReference type="ChEBI" id="CHEBI:134278"/>
        <dbReference type="ChEBI" id="CHEBI:136877"/>
        <dbReference type="ChEBI" id="CHEBI:136879"/>
    </reaction>
</comment>
<comment type="subunit">
    <text evidence="1">Homotetramer.</text>
</comment>
<comment type="similarity">
    <text evidence="1">Belongs to the class I-like SAM-binding methyltransferase superfamily. CmoB family.</text>
</comment>
<keyword id="KW-1185">Reference proteome</keyword>
<keyword id="KW-0808">Transferase</keyword>
<keyword id="KW-0819">tRNA processing</keyword>
<evidence type="ECO:0000255" key="1">
    <source>
        <dbReference type="HAMAP-Rule" id="MF_01590"/>
    </source>
</evidence>
<sequence>MIDFASFYQVIAKSRLSHWLHTLPAQLNAWENSERHGNLPKWQRVLTKLEHYQSSHVNLSDRVEIGQPGEISAGETRKLENLLQHFHPWRKGPFYLFGIHIDTEWRSDWKWDRVLPHISPLKDRYVLDVGCGSGYHLWRMRGEGAELAVGIDPAALFLCQFTAVKQLGGNDPQVHFLPLGIQELPPLRAFDTVFSMGVLYHRRSPIDHIYQLKDQLRDGGELVLETLIVDGDENTVLVPDDRYAQMNNVWFLPSPAAMIKWLKKCGFQDVRMVDEDVTTTDEQRKTEWMQNDSLAQYLMPDDPTRTIEGYPAPKRAVFVATRGSED</sequence>
<protein>
    <recommendedName>
        <fullName evidence="1">tRNA U34 carboxymethyltransferase</fullName>
        <ecNumber evidence="1">2.5.1.-</ecNumber>
    </recommendedName>
</protein>
<accession>C4LBH9</accession>
<dbReference type="EC" id="2.5.1.-" evidence="1"/>
<dbReference type="EMBL" id="CP001616">
    <property type="protein sequence ID" value="ACQ92414.1"/>
    <property type="molecule type" value="Genomic_DNA"/>
</dbReference>
<dbReference type="RefSeq" id="WP_012729013.1">
    <property type="nucleotide sequence ID" value="NC_012691.1"/>
</dbReference>
<dbReference type="SMR" id="C4LBH9"/>
<dbReference type="STRING" id="595494.Tola_0786"/>
<dbReference type="KEGG" id="tau:Tola_0786"/>
<dbReference type="eggNOG" id="COG0500">
    <property type="taxonomic scope" value="Bacteria"/>
</dbReference>
<dbReference type="HOGENOM" id="CLU_052665_0_0_6"/>
<dbReference type="OrthoDB" id="9773188at2"/>
<dbReference type="Proteomes" id="UP000009073">
    <property type="component" value="Chromosome"/>
</dbReference>
<dbReference type="GO" id="GO:0016765">
    <property type="term" value="F:transferase activity, transferring alkyl or aryl (other than methyl) groups"/>
    <property type="evidence" value="ECO:0007669"/>
    <property type="project" value="UniProtKB-UniRule"/>
</dbReference>
<dbReference type="GO" id="GO:0002098">
    <property type="term" value="P:tRNA wobble uridine modification"/>
    <property type="evidence" value="ECO:0007669"/>
    <property type="project" value="InterPro"/>
</dbReference>
<dbReference type="CDD" id="cd02440">
    <property type="entry name" value="AdoMet_MTases"/>
    <property type="match status" value="1"/>
</dbReference>
<dbReference type="Gene3D" id="3.40.50.150">
    <property type="entry name" value="Vaccinia Virus protein VP39"/>
    <property type="match status" value="1"/>
</dbReference>
<dbReference type="HAMAP" id="MF_01590">
    <property type="entry name" value="tRNA_carboxymethyltr_CmoB"/>
    <property type="match status" value="1"/>
</dbReference>
<dbReference type="InterPro" id="IPR010017">
    <property type="entry name" value="CmoB"/>
</dbReference>
<dbReference type="InterPro" id="IPR027555">
    <property type="entry name" value="Mo5U34_MeTrfas-like"/>
</dbReference>
<dbReference type="InterPro" id="IPR029063">
    <property type="entry name" value="SAM-dependent_MTases_sf"/>
</dbReference>
<dbReference type="NCBIfam" id="NF011650">
    <property type="entry name" value="PRK15068.1"/>
    <property type="match status" value="1"/>
</dbReference>
<dbReference type="NCBIfam" id="TIGR00452">
    <property type="entry name" value="tRNA 5-methoxyuridine(34)/uridine 5-oxyacetic acid(34) synthase CmoB"/>
    <property type="match status" value="1"/>
</dbReference>
<dbReference type="PANTHER" id="PTHR43861">
    <property type="entry name" value="TRANS-ACONITATE 2-METHYLTRANSFERASE-RELATED"/>
    <property type="match status" value="1"/>
</dbReference>
<dbReference type="Pfam" id="PF08003">
    <property type="entry name" value="Methyltransf_9"/>
    <property type="match status" value="1"/>
</dbReference>
<dbReference type="SUPFAM" id="SSF53335">
    <property type="entry name" value="S-adenosyl-L-methionine-dependent methyltransferases"/>
    <property type="match status" value="1"/>
</dbReference>